<keyword id="KW-1032">Host cell membrane</keyword>
<keyword id="KW-1043">Host membrane</keyword>
<keyword id="KW-0945">Host-virus interaction</keyword>
<keyword id="KW-1090">Inhibition of host innate immune response by virus</keyword>
<keyword id="KW-0449">Lipoprotein</keyword>
<keyword id="KW-0472">Membrane</keyword>
<keyword id="KW-0519">Myristate</keyword>
<keyword id="KW-0597">Phosphoprotein</keyword>
<keyword id="KW-1185">Reference proteome</keyword>
<keyword id="KW-0941">Suppressor of RNA silencing</keyword>
<keyword id="KW-0899">Viral immunoevasion</keyword>
<comment type="function">
    <text evidence="2 4">Major determinant of pathogenesis that affects the hyperplastic response of the host to viral infection. Mediates the induction of cell division in permissive cells, mainly in phloem. May act as a suppressor of RNA-mediated gene silencing, also known as post-transcriptional gene silencing (PTGS), a mechanism of plant viral defense that limits the accumulation of viral RNAs.</text>
</comment>
<comment type="subunit">
    <text evidence="3">Interacts with Arabidopsis thaliana RCH2, ASK7/ASK-eta and ASK6/ASK-zeta.</text>
</comment>
<comment type="subcellular location">
    <subcellularLocation>
        <location evidence="3">Host cell membrane</location>
        <topology evidence="3">Lipid-anchor</topology>
    </subcellularLocation>
    <text>Localizes to the cell periphery.</text>
</comment>
<comment type="tissue specificity">
    <text evidence="4">Expressed in vascular tissues, and especially in phloem cells.</text>
</comment>
<comment type="PTM">
    <text evidence="3">Phosphorylated by Arabidopsis thaliana ASK7/ASK-eta mainly on threonine and serine residues.</text>
</comment>
<comment type="similarity">
    <text evidence="5">Belongs to the geminiviridae protein AC4/C4 family.</text>
</comment>
<comment type="sequence caution" evidence="5">
    <conflict type="erroneous initiation">
        <sequence resource="EMBL-CDS" id="AAK59259"/>
    </conflict>
</comment>
<sequence>MGNLISTSCFNSKEKFRSQISDYSTWYPQPGQHISIRTFRELNPAPTSSPTSTRTETQLNGGNSRSTVEVLEEVNRQLTTHMPRR</sequence>
<accession>Q91J24</accession>
<accession>D4PH95</accession>
<gene>
    <name type="ORF">C4</name>
    <name type="ORF">L4</name>
</gene>
<protein>
    <recommendedName>
        <fullName>Protein C4</fullName>
    </recommendedName>
    <alternativeName>
        <fullName>Protein L4</fullName>
    </alternativeName>
</protein>
<name>AC4_BCTVC</name>
<feature type="initiator methionine" description="Removed; by host" evidence="3">
    <location>
        <position position="1"/>
    </location>
</feature>
<feature type="chain" id="PRO_0000287219" description="Protein C4">
    <location>
        <begin position="2"/>
        <end position="85"/>
    </location>
</feature>
<feature type="region of interest" description="Disordered" evidence="1">
    <location>
        <begin position="42"/>
        <end position="65"/>
    </location>
</feature>
<feature type="compositionally biased region" description="Low complexity" evidence="1">
    <location>
        <begin position="44"/>
        <end position="57"/>
    </location>
</feature>
<feature type="lipid moiety-binding region" description="N-myristoyl glycine; by host" evidence="3">
    <location>
        <position position="2"/>
    </location>
</feature>
<feature type="sequence variant" description="In strain: Infectious clone pBCT028.">
    <original>R</original>
    <variation>Q</variation>
    <location>
        <position position="37"/>
    </location>
</feature>
<feature type="sequence variant" description="In strain: Infectious clone pBCT028.">
    <original>G</original>
    <variation>E</variation>
    <location>
        <position position="62"/>
    </location>
</feature>
<feature type="mutagenesis site" description="Reduced pathogenicity on N.benthamiana, and loss of anchoring to the plasma membrane." evidence="3">
    <original>G</original>
    <variation>A</variation>
    <location>
        <position position="2"/>
    </location>
</feature>
<feature type="mutagenesis site" description="Reduced pathogenicity on N.benthamiana." evidence="3">
    <original>P</original>
    <variation>R</variation>
    <location>
        <position position="44"/>
    </location>
</feature>
<feature type="mutagenesis site" description="Reduced pathogenicity on N.benthamiana." evidence="3">
    <original>A</original>
    <variation>L</variation>
    <location>
        <position position="45"/>
    </location>
</feature>
<feature type="mutagenesis site" description="Reduced pathogenicity on N.benthamiana." evidence="3">
    <original>S</original>
    <variation>R</variation>
    <location>
        <position position="49"/>
    </location>
</feature>
<feature type="mutagenesis site" description="Reduced pathogenicity on N.benthamiana." evidence="3">
    <original>P</original>
    <variation>R</variation>
    <location>
        <position position="50"/>
    </location>
</feature>
<reference key="1">
    <citation type="journal article" date="1986" name="EMBO J.">
        <title>The nucleotide sequence of an infectious clone of the geminivirus beet curly top virus.</title>
        <authorList>
            <person name="Stanley J."/>
            <person name="Markham P.G."/>
            <person name="Callis R.J."/>
            <person name="Pinner M.S."/>
        </authorList>
    </citation>
    <scope>NUCLEOTIDE SEQUENCE [GENOMIC DNA]</scope>
    <source>
        <strain>Infectious clone pBCT028</strain>
    </source>
</reference>
<reference key="2">
    <citation type="submission" date="2001-05" db="EMBL/GenBank/DDBJ databases">
        <authorList>
            <person name="Bisaro D.M."/>
            <person name="Hormuzdi S.G."/>
        </authorList>
    </citation>
    <scope>NUCLEOTIDE SEQUENCE [GENOMIC DNA]</scope>
</reference>
<reference key="3">
    <citation type="journal article" date="1992" name="Virology">
        <title>A symptom variant of beet curly top geminivirus produced by mutation of open reading frame C4.</title>
        <authorList>
            <person name="Stanley J."/>
            <person name="Latham J.R."/>
        </authorList>
    </citation>
    <scope>FUNCTION</scope>
</reference>
<reference key="4">
    <citation type="journal article" date="1997" name="Plant J.">
        <title>Induction of plant cell division by beet curly top virus gene C4.</title>
        <authorList>
            <person name="Latham J.R."/>
            <person name="Saunders K."/>
            <person name="Pinner M.S."/>
            <person name="Stanley J."/>
        </authorList>
    </citation>
    <scope>FUNCTION</scope>
    <scope>TISSUE SPECIFICITY</scope>
</reference>
<reference key="5">
    <citation type="journal article" date="2007" name="Virology">
        <title>Geminivirus pathogenicity protein C4 interacts with Arabidopsis thaliana shaggy-related protein kinase AtSKeta, a component of the brassinosteroid signalling pathway.</title>
        <authorList>
            <person name="Piroux N."/>
            <person name="Saunders K."/>
            <person name="Page A."/>
            <person name="Stanley J."/>
        </authorList>
    </citation>
    <scope>SUBCELLULAR LOCATION</scope>
    <scope>INTERACTION WITH ARABIDOPSIS THALIANA RCH2; ASK7/ASK-ETA AND ASK6/ASK-ZETA</scope>
    <scope>MUTAGENESIS OF GLY-2; PRO-44; ALA-45; SER-49 AND PRO-50</scope>
    <scope>MYRISTOYLATION AT GLY-2</scope>
    <scope>PHOSPHORYLATION BY ARABIDOPSIS THALIANA ASK7/ASK-ETA</scope>
</reference>
<organism>
    <name type="scientific">Beet curly top virus (strain California/Logan)</name>
    <name type="common">BCTV</name>
    <dbReference type="NCBI Taxonomy" id="268960"/>
    <lineage>
        <taxon>Viruses</taxon>
        <taxon>Monodnaviria</taxon>
        <taxon>Shotokuvirae</taxon>
        <taxon>Cressdnaviricota</taxon>
        <taxon>Repensiviricetes</taxon>
        <taxon>Geplafuvirales</taxon>
        <taxon>Geminiviridae</taxon>
        <taxon>Curtovirus</taxon>
        <taxon>Beet curly top virus</taxon>
    </lineage>
</organism>
<dbReference type="EMBL" id="M24597">
    <property type="protein sequence ID" value="ADD82466.1"/>
    <property type="molecule type" value="Genomic_DNA"/>
</dbReference>
<dbReference type="EMBL" id="AF379637">
    <property type="protein sequence ID" value="AAK59259.1"/>
    <property type="status" value="ALT_INIT"/>
    <property type="molecule type" value="Genomic_DNA"/>
</dbReference>
<dbReference type="SMR" id="Q91J24"/>
<dbReference type="iPTMnet" id="Q91J24"/>
<dbReference type="SwissPalm" id="Q91J24"/>
<dbReference type="Proteomes" id="UP000006542">
    <property type="component" value="Genome"/>
</dbReference>
<dbReference type="GO" id="GO:0020002">
    <property type="term" value="C:host cell plasma membrane"/>
    <property type="evidence" value="ECO:0007669"/>
    <property type="project" value="UniProtKB-SubCell"/>
</dbReference>
<dbReference type="GO" id="GO:0016020">
    <property type="term" value="C:membrane"/>
    <property type="evidence" value="ECO:0007669"/>
    <property type="project" value="UniProtKB-KW"/>
</dbReference>
<dbReference type="GO" id="GO:0052170">
    <property type="term" value="P:symbiont-mediated suppression of host innate immune response"/>
    <property type="evidence" value="ECO:0007669"/>
    <property type="project" value="UniProtKB-KW"/>
</dbReference>
<dbReference type="InterPro" id="IPR002488">
    <property type="entry name" value="Gemini_C4"/>
</dbReference>
<dbReference type="Pfam" id="PF01492">
    <property type="entry name" value="Gemini_C4"/>
    <property type="match status" value="1"/>
</dbReference>
<evidence type="ECO:0000256" key="1">
    <source>
        <dbReference type="SAM" id="MobiDB-lite"/>
    </source>
</evidence>
<evidence type="ECO:0000269" key="2">
    <source>
    </source>
</evidence>
<evidence type="ECO:0000269" key="3">
    <source>
    </source>
</evidence>
<evidence type="ECO:0000269" key="4">
    <source ref="4"/>
</evidence>
<evidence type="ECO:0000305" key="5"/>
<proteinExistence type="evidence at protein level"/>
<organismHost>
    <name type="scientific">Beta vulgaris</name>
    <name type="common">Sugar beet</name>
    <dbReference type="NCBI Taxonomy" id="161934"/>
</organismHost>
<organismHost>
    <name type="scientific">Capsicum</name>
    <name type="common">peppers</name>
    <dbReference type="NCBI Taxonomy" id="4071"/>
</organismHost>
<organismHost>
    <name type="scientific">Cucurbitaceae</name>
    <dbReference type="NCBI Taxonomy" id="3650"/>
</organismHost>
<organismHost>
    <name type="scientific">Linum</name>
    <dbReference type="NCBI Taxonomy" id="4005"/>
</organismHost>
<organismHost>
    <name type="scientific">Phaseolus vulgaris</name>
    <name type="common">Kidney bean</name>
    <name type="synonym">French bean</name>
    <dbReference type="NCBI Taxonomy" id="3885"/>
</organismHost>
<organismHost>
    <name type="scientific">Solanum lycopersicum</name>
    <name type="common">Tomato</name>
    <name type="synonym">Lycopersicon esculentum</name>
    <dbReference type="NCBI Taxonomy" id="4081"/>
</organismHost>
<organismHost>
    <name type="scientific">Solanum tuberosum</name>
    <name type="common">Potato</name>
    <dbReference type="NCBI Taxonomy" id="4113"/>
</organismHost>
<organismHost>
    <name type="scientific">Spinacia oleracea</name>
    <name type="common">Spinach</name>
    <dbReference type="NCBI Taxonomy" id="3562"/>
</organismHost>